<organism>
    <name type="scientific">Cupriavidus pinatubonensis (strain JMP 134 / LMG 1197)</name>
    <name type="common">Cupriavidus necator (strain JMP 134)</name>
    <dbReference type="NCBI Taxonomy" id="264198"/>
    <lineage>
        <taxon>Bacteria</taxon>
        <taxon>Pseudomonadati</taxon>
        <taxon>Pseudomonadota</taxon>
        <taxon>Betaproteobacteria</taxon>
        <taxon>Burkholderiales</taxon>
        <taxon>Burkholderiaceae</taxon>
        <taxon>Cupriavidus</taxon>
    </lineage>
</organism>
<keyword id="KW-0349">Heme</keyword>
<keyword id="KW-0376">Hydrogen peroxide</keyword>
<keyword id="KW-0408">Iron</keyword>
<keyword id="KW-0479">Metal-binding</keyword>
<keyword id="KW-0560">Oxidoreductase</keyword>
<keyword id="KW-0575">Peroxidase</keyword>
<accession>Q471D2</accession>
<feature type="chain" id="PRO_0000354876" description="Catalase-peroxidase 1">
    <location>
        <begin position="1"/>
        <end position="751"/>
    </location>
</feature>
<feature type="region of interest" description="Disordered" evidence="2">
    <location>
        <begin position="1"/>
        <end position="31"/>
    </location>
</feature>
<feature type="region of interest" description="Disordered" evidence="2">
    <location>
        <begin position="345"/>
        <end position="375"/>
    </location>
</feature>
<feature type="compositionally biased region" description="Basic and acidic residues" evidence="2">
    <location>
        <begin position="1"/>
        <end position="11"/>
    </location>
</feature>
<feature type="active site" description="Proton acceptor" evidence="1">
    <location>
        <position position="104"/>
    </location>
</feature>
<feature type="binding site" description="axial binding residue" evidence="1">
    <location>
        <position position="266"/>
    </location>
    <ligand>
        <name>heme b</name>
        <dbReference type="ChEBI" id="CHEBI:60344"/>
    </ligand>
    <ligandPart>
        <name>Fe</name>
        <dbReference type="ChEBI" id="CHEBI:18248"/>
    </ligandPart>
</feature>
<feature type="site" description="Transition state stabilizer" evidence="1">
    <location>
        <position position="100"/>
    </location>
</feature>
<feature type="cross-link" description="Tryptophyl-tyrosyl-methioninium (Trp-Tyr) (with M-251)" evidence="1">
    <location>
        <begin position="103"/>
        <end position="225"/>
    </location>
</feature>
<feature type="cross-link" description="Tryptophyl-tyrosyl-methioninium (Tyr-Met) (with W-103)" evidence="1">
    <location>
        <begin position="225"/>
        <end position="251"/>
    </location>
</feature>
<evidence type="ECO:0000255" key="1">
    <source>
        <dbReference type="HAMAP-Rule" id="MF_01961"/>
    </source>
</evidence>
<evidence type="ECO:0000256" key="2">
    <source>
        <dbReference type="SAM" id="MobiDB-lite"/>
    </source>
</evidence>
<proteinExistence type="inferred from homology"/>
<reference key="1">
    <citation type="journal article" date="2010" name="PLoS ONE">
        <title>The complete multipartite genome sequence of Cupriavidus necator JMP134, a versatile pollutant degrader.</title>
        <authorList>
            <person name="Lykidis A."/>
            <person name="Perez-Pantoja D."/>
            <person name="Ledger T."/>
            <person name="Mavromatis K."/>
            <person name="Anderson I.J."/>
            <person name="Ivanova N.N."/>
            <person name="Hooper S.D."/>
            <person name="Lapidus A."/>
            <person name="Lucas S."/>
            <person name="Gonzalez B."/>
            <person name="Kyrpides N.C."/>
        </authorList>
    </citation>
    <scope>NUCLEOTIDE SEQUENCE [LARGE SCALE GENOMIC DNA]</scope>
    <source>
        <strain>JMP134 / LMG 1197</strain>
    </source>
</reference>
<dbReference type="EC" id="1.11.1.21" evidence="1"/>
<dbReference type="EMBL" id="CP000090">
    <property type="protein sequence ID" value="AAZ61001.1"/>
    <property type="molecule type" value="Genomic_DNA"/>
</dbReference>
<dbReference type="SMR" id="Q471D2"/>
<dbReference type="STRING" id="264198.Reut_A1635"/>
<dbReference type="PeroxiBase" id="2661">
    <property type="entry name" value="ReCP02_JMP134"/>
</dbReference>
<dbReference type="KEGG" id="reu:Reut_A1635"/>
<dbReference type="eggNOG" id="COG0376">
    <property type="taxonomic scope" value="Bacteria"/>
</dbReference>
<dbReference type="HOGENOM" id="CLU_025424_2_0_4"/>
<dbReference type="OrthoDB" id="9759743at2"/>
<dbReference type="GO" id="GO:0005829">
    <property type="term" value="C:cytosol"/>
    <property type="evidence" value="ECO:0007669"/>
    <property type="project" value="TreeGrafter"/>
</dbReference>
<dbReference type="GO" id="GO:0004096">
    <property type="term" value="F:catalase activity"/>
    <property type="evidence" value="ECO:0007669"/>
    <property type="project" value="UniProtKB-UniRule"/>
</dbReference>
<dbReference type="GO" id="GO:0020037">
    <property type="term" value="F:heme binding"/>
    <property type="evidence" value="ECO:0007669"/>
    <property type="project" value="InterPro"/>
</dbReference>
<dbReference type="GO" id="GO:0046872">
    <property type="term" value="F:metal ion binding"/>
    <property type="evidence" value="ECO:0007669"/>
    <property type="project" value="UniProtKB-KW"/>
</dbReference>
<dbReference type="GO" id="GO:0070301">
    <property type="term" value="P:cellular response to hydrogen peroxide"/>
    <property type="evidence" value="ECO:0007669"/>
    <property type="project" value="TreeGrafter"/>
</dbReference>
<dbReference type="GO" id="GO:0042744">
    <property type="term" value="P:hydrogen peroxide catabolic process"/>
    <property type="evidence" value="ECO:0007669"/>
    <property type="project" value="UniProtKB-KW"/>
</dbReference>
<dbReference type="CDD" id="cd00649">
    <property type="entry name" value="catalase_peroxidase_1"/>
    <property type="match status" value="1"/>
</dbReference>
<dbReference type="CDD" id="cd08200">
    <property type="entry name" value="catalase_peroxidase_2"/>
    <property type="match status" value="1"/>
</dbReference>
<dbReference type="FunFam" id="1.10.420.10:FF:000002">
    <property type="entry name" value="Catalase-peroxidase"/>
    <property type="match status" value="1"/>
</dbReference>
<dbReference type="FunFam" id="1.10.420.10:FF:000004">
    <property type="entry name" value="Catalase-peroxidase"/>
    <property type="match status" value="1"/>
</dbReference>
<dbReference type="FunFam" id="1.10.520.10:FF:000002">
    <property type="entry name" value="Catalase-peroxidase"/>
    <property type="match status" value="1"/>
</dbReference>
<dbReference type="Gene3D" id="1.10.520.10">
    <property type="match status" value="2"/>
</dbReference>
<dbReference type="Gene3D" id="1.10.420.10">
    <property type="entry name" value="Peroxidase, domain 2"/>
    <property type="match status" value="2"/>
</dbReference>
<dbReference type="HAMAP" id="MF_01961">
    <property type="entry name" value="Catal_peroxid"/>
    <property type="match status" value="1"/>
</dbReference>
<dbReference type="InterPro" id="IPR000763">
    <property type="entry name" value="Catalase_peroxidase"/>
</dbReference>
<dbReference type="InterPro" id="IPR002016">
    <property type="entry name" value="Haem_peroxidase"/>
</dbReference>
<dbReference type="InterPro" id="IPR010255">
    <property type="entry name" value="Haem_peroxidase_sf"/>
</dbReference>
<dbReference type="InterPro" id="IPR019794">
    <property type="entry name" value="Peroxidases_AS"/>
</dbReference>
<dbReference type="InterPro" id="IPR019793">
    <property type="entry name" value="Peroxidases_heam-ligand_BS"/>
</dbReference>
<dbReference type="NCBIfam" id="TIGR00198">
    <property type="entry name" value="cat_per_HPI"/>
    <property type="match status" value="1"/>
</dbReference>
<dbReference type="NCBIfam" id="NF011635">
    <property type="entry name" value="PRK15061.1"/>
    <property type="match status" value="1"/>
</dbReference>
<dbReference type="PANTHER" id="PTHR30555:SF0">
    <property type="entry name" value="CATALASE-PEROXIDASE"/>
    <property type="match status" value="1"/>
</dbReference>
<dbReference type="PANTHER" id="PTHR30555">
    <property type="entry name" value="HYDROPEROXIDASE I, BIFUNCTIONAL CATALASE-PEROXIDASE"/>
    <property type="match status" value="1"/>
</dbReference>
<dbReference type="Pfam" id="PF00141">
    <property type="entry name" value="peroxidase"/>
    <property type="match status" value="2"/>
</dbReference>
<dbReference type="PRINTS" id="PR00460">
    <property type="entry name" value="BPEROXIDASE"/>
</dbReference>
<dbReference type="PRINTS" id="PR00458">
    <property type="entry name" value="PEROXIDASE"/>
</dbReference>
<dbReference type="SUPFAM" id="SSF48113">
    <property type="entry name" value="Heme-dependent peroxidases"/>
    <property type="match status" value="2"/>
</dbReference>
<dbReference type="PROSITE" id="PS00435">
    <property type="entry name" value="PEROXIDASE_1"/>
    <property type="match status" value="1"/>
</dbReference>
<dbReference type="PROSITE" id="PS00436">
    <property type="entry name" value="PEROXIDASE_2"/>
    <property type="match status" value="1"/>
</dbReference>
<dbReference type="PROSITE" id="PS50873">
    <property type="entry name" value="PEROXIDASE_4"/>
    <property type="match status" value="1"/>
</dbReference>
<sequence length="751" mass="83059">MTDKQHTRSVSESENPAIPSPTPKVSRPRRNKDWWPNQLDLSVLHTHSHLSCPLEEEFDYADQFKGLDVDALKQDLIQLMTTSQDWWPADYGHYGPLFIRMSWHAAGTYRIADGRGGGGEGQQRFAPLNSWPDNANLDKARRLLWPLKKKYGQKVSWADLLIFAGNVAYESMGFKTFGFGFGRPDVWEPEDIFWGPEDTWLGDERYSGDRELAKPLANVQMGLIYVNPEGPGGNPDPLAAARDIRETFARMAMNDEETVALIVGGHTVGKTHGAAPAAGNVGLEPEGAPIEEQGLGWKNKFGSGKGSDAITSGLEGAWTNNPTKWDNGFLENLFKYEWELTTSPAGAKQWKPKNPEANDTVPDAHGASRRHSPTMLTTDLSLRMDPIYGPIAKRFHDNPDQLEDAFAKAWFKLLHRDMGPRSRYLGPWIPEAQLWQDPIPPVDHELVSEQDIDALKRTILGSGLSVPELISTAWGAAASFRGTDKRGGANGARIRLAPQKDWESNEPSRLAKVLTALERIQNDFNGSQSGGKKVSLADLIVLGGCAAVEEAARKAGFNISVPFAPGRTDASQEQTDESIFDVLEPIGDAFRNYFRAEDPLSPETRLLDRANLLKLTAPQMTVLVGGMRMLDANHGQSRHGVFTDKPGTLSNEFFVNLLDIGTAWRPSVADKSVYEGIDRTSGKTRWTATAADLVFGAHSQLRALAEVYACDDGKERFVRDFVAAWNKVMNLDRYDLLGTRNGRRAVTSKPV</sequence>
<protein>
    <recommendedName>
        <fullName evidence="1">Catalase-peroxidase 1</fullName>
        <shortName evidence="1">CP 1</shortName>
        <ecNumber evidence="1">1.11.1.21</ecNumber>
    </recommendedName>
    <alternativeName>
        <fullName evidence="1">Peroxidase/catalase 1</fullName>
    </alternativeName>
</protein>
<gene>
    <name evidence="1" type="primary">katG1</name>
    <name type="ordered locus">Reut_A1635</name>
</gene>
<comment type="function">
    <text evidence="1">Bifunctional enzyme with both catalase and broad-spectrum peroxidase activity.</text>
</comment>
<comment type="catalytic activity">
    <reaction evidence="1">
        <text>H2O2 + AH2 = A + 2 H2O</text>
        <dbReference type="Rhea" id="RHEA:30275"/>
        <dbReference type="ChEBI" id="CHEBI:13193"/>
        <dbReference type="ChEBI" id="CHEBI:15377"/>
        <dbReference type="ChEBI" id="CHEBI:16240"/>
        <dbReference type="ChEBI" id="CHEBI:17499"/>
        <dbReference type="EC" id="1.11.1.21"/>
    </reaction>
</comment>
<comment type="catalytic activity">
    <reaction evidence="1">
        <text>2 H2O2 = O2 + 2 H2O</text>
        <dbReference type="Rhea" id="RHEA:20309"/>
        <dbReference type="ChEBI" id="CHEBI:15377"/>
        <dbReference type="ChEBI" id="CHEBI:15379"/>
        <dbReference type="ChEBI" id="CHEBI:16240"/>
        <dbReference type="EC" id="1.11.1.21"/>
    </reaction>
</comment>
<comment type="cofactor">
    <cofactor evidence="1">
        <name>heme b</name>
        <dbReference type="ChEBI" id="CHEBI:60344"/>
    </cofactor>
    <text evidence="1">Binds 1 heme b (iron(II)-protoporphyrin IX) group per dimer.</text>
</comment>
<comment type="subunit">
    <text evidence="1">Homodimer or homotetramer.</text>
</comment>
<comment type="PTM">
    <text evidence="1">Formation of the three residue Trp-Tyr-Met cross-link is important for the catalase, but not the peroxidase activity of the enzyme.</text>
</comment>
<comment type="similarity">
    <text evidence="1">Belongs to the peroxidase family. Peroxidase/catalase subfamily.</text>
</comment>
<name>KATG1_CUPPJ</name>